<feature type="signal peptide" evidence="1">
    <location>
        <begin position="1"/>
        <end position="22"/>
    </location>
</feature>
<feature type="chain" id="PRO_0000424783" description="Non-specific phospholipase C1">
    <location>
        <begin position="23"/>
        <end position="533"/>
    </location>
</feature>
<feature type="sequence conflict" description="In Ref. 2; AAF82197." evidence="3" ref="2">
    <original>P</original>
    <variation>S</variation>
    <location>
        <position position="360"/>
    </location>
</feature>
<organism>
    <name type="scientific">Arabidopsis thaliana</name>
    <name type="common">Mouse-ear cress</name>
    <dbReference type="NCBI Taxonomy" id="3702"/>
    <lineage>
        <taxon>Eukaryota</taxon>
        <taxon>Viridiplantae</taxon>
        <taxon>Streptophyta</taxon>
        <taxon>Embryophyta</taxon>
        <taxon>Tracheophyta</taxon>
        <taxon>Spermatophyta</taxon>
        <taxon>Magnoliopsida</taxon>
        <taxon>eudicotyledons</taxon>
        <taxon>Gunneridae</taxon>
        <taxon>Pentapetalae</taxon>
        <taxon>rosids</taxon>
        <taxon>malvids</taxon>
        <taxon>Brassicales</taxon>
        <taxon>Brassicaceae</taxon>
        <taxon>Camelineae</taxon>
        <taxon>Arabidopsis</taxon>
    </lineage>
</organism>
<evidence type="ECO:0000255" key="1"/>
<evidence type="ECO:0000269" key="2">
    <source>
    </source>
</evidence>
<evidence type="ECO:0000305" key="3"/>
<reference key="1">
    <citation type="journal article" date="2005" name="J. Biol. Chem.">
        <title>A novel phosphatidylcholine-hydrolyzing phospholipase C induced by phosphate starvation in Arabidopsis.</title>
        <authorList>
            <person name="Nakamura Y."/>
            <person name="Awai K."/>
            <person name="Masuda T."/>
            <person name="Yoshioka Y."/>
            <person name="Takamiya K."/>
            <person name="Ohta H."/>
        </authorList>
    </citation>
    <scope>NUCLEOTIDE SEQUENCE [MRNA]</scope>
    <scope>LACK OF INDUCTION BY PHOSPHATE DEPRIVATION</scope>
</reference>
<reference key="2">
    <citation type="journal article" date="2000" name="Nature">
        <title>Sequence and analysis of chromosome 1 of the plant Arabidopsis thaliana.</title>
        <authorList>
            <person name="Theologis A."/>
            <person name="Ecker J.R."/>
            <person name="Palm C.J."/>
            <person name="Federspiel N.A."/>
            <person name="Kaul S."/>
            <person name="White O."/>
            <person name="Alonso J."/>
            <person name="Altafi H."/>
            <person name="Araujo R."/>
            <person name="Bowman C.L."/>
            <person name="Brooks S.Y."/>
            <person name="Buehler E."/>
            <person name="Chan A."/>
            <person name="Chao Q."/>
            <person name="Chen H."/>
            <person name="Cheuk R.F."/>
            <person name="Chin C.W."/>
            <person name="Chung M.K."/>
            <person name="Conn L."/>
            <person name="Conway A.B."/>
            <person name="Conway A.R."/>
            <person name="Creasy T.H."/>
            <person name="Dewar K."/>
            <person name="Dunn P."/>
            <person name="Etgu P."/>
            <person name="Feldblyum T.V."/>
            <person name="Feng J.-D."/>
            <person name="Fong B."/>
            <person name="Fujii C.Y."/>
            <person name="Gill J.E."/>
            <person name="Goldsmith A.D."/>
            <person name="Haas B."/>
            <person name="Hansen N.F."/>
            <person name="Hughes B."/>
            <person name="Huizar L."/>
            <person name="Hunter J.L."/>
            <person name="Jenkins J."/>
            <person name="Johnson-Hopson C."/>
            <person name="Khan S."/>
            <person name="Khaykin E."/>
            <person name="Kim C.J."/>
            <person name="Koo H.L."/>
            <person name="Kremenetskaia I."/>
            <person name="Kurtz D.B."/>
            <person name="Kwan A."/>
            <person name="Lam B."/>
            <person name="Langin-Hooper S."/>
            <person name="Lee A."/>
            <person name="Lee J.M."/>
            <person name="Lenz C.A."/>
            <person name="Li J.H."/>
            <person name="Li Y.-P."/>
            <person name="Lin X."/>
            <person name="Liu S.X."/>
            <person name="Liu Z.A."/>
            <person name="Luros J.S."/>
            <person name="Maiti R."/>
            <person name="Marziali A."/>
            <person name="Militscher J."/>
            <person name="Miranda M."/>
            <person name="Nguyen M."/>
            <person name="Nierman W.C."/>
            <person name="Osborne B.I."/>
            <person name="Pai G."/>
            <person name="Peterson J."/>
            <person name="Pham P.K."/>
            <person name="Rizzo M."/>
            <person name="Rooney T."/>
            <person name="Rowley D."/>
            <person name="Sakano H."/>
            <person name="Salzberg S.L."/>
            <person name="Schwartz J.R."/>
            <person name="Shinn P."/>
            <person name="Southwick A.M."/>
            <person name="Sun H."/>
            <person name="Tallon L.J."/>
            <person name="Tambunga G."/>
            <person name="Toriumi M.J."/>
            <person name="Town C.D."/>
            <person name="Utterback T."/>
            <person name="Van Aken S."/>
            <person name="Vaysberg M."/>
            <person name="Vysotskaia V.S."/>
            <person name="Walker M."/>
            <person name="Wu D."/>
            <person name="Yu G."/>
            <person name="Fraser C.M."/>
            <person name="Venter J.C."/>
            <person name="Davis R.W."/>
        </authorList>
    </citation>
    <scope>NUCLEOTIDE SEQUENCE [LARGE SCALE GENOMIC DNA]</scope>
    <source>
        <strain>cv. Columbia</strain>
    </source>
</reference>
<reference key="3">
    <citation type="journal article" date="2017" name="Plant J.">
        <title>Araport11: a complete reannotation of the Arabidopsis thaliana reference genome.</title>
        <authorList>
            <person name="Cheng C.Y."/>
            <person name="Krishnakumar V."/>
            <person name="Chan A.P."/>
            <person name="Thibaud-Nissen F."/>
            <person name="Schobel S."/>
            <person name="Town C.D."/>
        </authorList>
    </citation>
    <scope>GENOME REANNOTATION</scope>
    <source>
        <strain>cv. Columbia</strain>
    </source>
</reference>
<reference key="4">
    <citation type="journal article" date="2003" name="Science">
        <title>Empirical analysis of transcriptional activity in the Arabidopsis genome.</title>
        <authorList>
            <person name="Yamada K."/>
            <person name="Lim J."/>
            <person name="Dale J.M."/>
            <person name="Chen H."/>
            <person name="Shinn P."/>
            <person name="Palm C.J."/>
            <person name="Southwick A.M."/>
            <person name="Wu H.C."/>
            <person name="Kim C.J."/>
            <person name="Nguyen M."/>
            <person name="Pham P.K."/>
            <person name="Cheuk R.F."/>
            <person name="Karlin-Newmann G."/>
            <person name="Liu S.X."/>
            <person name="Lam B."/>
            <person name="Sakano H."/>
            <person name="Wu T."/>
            <person name="Yu G."/>
            <person name="Miranda M."/>
            <person name="Quach H.L."/>
            <person name="Tripp M."/>
            <person name="Chang C.H."/>
            <person name="Lee J.M."/>
            <person name="Toriumi M.J."/>
            <person name="Chan M.M."/>
            <person name="Tang C.C."/>
            <person name="Onodera C.S."/>
            <person name="Deng J.M."/>
            <person name="Akiyama K."/>
            <person name="Ansari Y."/>
            <person name="Arakawa T."/>
            <person name="Banh J."/>
            <person name="Banno F."/>
            <person name="Bowser L."/>
            <person name="Brooks S.Y."/>
            <person name="Carninci P."/>
            <person name="Chao Q."/>
            <person name="Choy N."/>
            <person name="Enju A."/>
            <person name="Goldsmith A.D."/>
            <person name="Gurjal M."/>
            <person name="Hansen N.F."/>
            <person name="Hayashizaki Y."/>
            <person name="Johnson-Hopson C."/>
            <person name="Hsuan V.W."/>
            <person name="Iida K."/>
            <person name="Karnes M."/>
            <person name="Khan S."/>
            <person name="Koesema E."/>
            <person name="Ishida J."/>
            <person name="Jiang P.X."/>
            <person name="Jones T."/>
            <person name="Kawai J."/>
            <person name="Kamiya A."/>
            <person name="Meyers C."/>
            <person name="Nakajima M."/>
            <person name="Narusaka M."/>
            <person name="Seki M."/>
            <person name="Sakurai T."/>
            <person name="Satou M."/>
            <person name="Tamse R."/>
            <person name="Vaysberg M."/>
            <person name="Wallender E.K."/>
            <person name="Wong C."/>
            <person name="Yamamura Y."/>
            <person name="Yuan S."/>
            <person name="Shinozaki K."/>
            <person name="Davis R.W."/>
            <person name="Theologis A."/>
            <person name="Ecker J.R."/>
        </authorList>
    </citation>
    <scope>NUCLEOTIDE SEQUENCE [LARGE SCALE MRNA]</scope>
    <source>
        <strain>cv. Columbia</strain>
    </source>
</reference>
<reference key="5">
    <citation type="submission" date="2005-02" db="EMBL/GenBank/DDBJ databases">
        <title>Arabidopsis ORF clones.</title>
        <authorList>
            <person name="Cheuk R.F."/>
            <person name="Chen H."/>
            <person name="Kim C.J."/>
            <person name="Shinn P."/>
            <person name="Ecker J.R."/>
        </authorList>
    </citation>
    <scope>NUCLEOTIDE SEQUENCE [LARGE SCALE MRNA]</scope>
</reference>
<reference key="6">
    <citation type="journal article" date="2010" name="Mol. Plant">
        <title>Plant phosphatidylcholine-hydrolyzing phospholipases C NPC3 and NPC4 with roles in root development and brassinolide signaling in Arabidopsis thaliana.</title>
        <authorList>
            <person name="Wimalasekera R."/>
            <person name="Pejchar P."/>
            <person name="Holk A."/>
            <person name="Martinec J."/>
            <person name="Scherer G.F."/>
        </authorList>
    </citation>
    <scope>TISSUE SPECIFICITY</scope>
</reference>
<keyword id="KW-0378">Hydrolase</keyword>
<keyword id="KW-1185">Reference proteome</keyword>
<keyword id="KW-0964">Secreted</keyword>
<keyword id="KW-0732">Signal</keyword>
<name>NPC1_ARATH</name>
<dbReference type="EC" id="3.1.-.-"/>
<dbReference type="EMBL" id="AB084291">
    <property type="protein sequence ID" value="BAC22506.1"/>
    <property type="molecule type" value="mRNA"/>
</dbReference>
<dbReference type="EMBL" id="AC067971">
    <property type="protein sequence ID" value="AAF82197.1"/>
    <property type="molecule type" value="Genomic_DNA"/>
</dbReference>
<dbReference type="EMBL" id="CP002684">
    <property type="protein sequence ID" value="AEE28095.1"/>
    <property type="molecule type" value="Genomic_DNA"/>
</dbReference>
<dbReference type="EMBL" id="AY124005">
    <property type="protein sequence ID" value="AAM74513.1"/>
    <property type="molecule type" value="mRNA"/>
</dbReference>
<dbReference type="EMBL" id="BT020583">
    <property type="protein sequence ID" value="AAW80856.1"/>
    <property type="molecule type" value="mRNA"/>
</dbReference>
<dbReference type="PIR" id="E86207">
    <property type="entry name" value="E86207"/>
</dbReference>
<dbReference type="RefSeq" id="NP_172203.2">
    <property type="nucleotide sequence ID" value="NM_100597.4"/>
</dbReference>
<dbReference type="SMR" id="Q8L7Y9"/>
<dbReference type="FunCoup" id="Q8L7Y9">
    <property type="interactions" value="151"/>
</dbReference>
<dbReference type="STRING" id="3702.Q8L7Y9"/>
<dbReference type="GlyGen" id="Q8L7Y9">
    <property type="glycosylation" value="1 site"/>
</dbReference>
<dbReference type="PaxDb" id="3702-AT1G07230.1"/>
<dbReference type="ProteomicsDB" id="250518"/>
<dbReference type="EnsemblPlants" id="AT1G07230.1">
    <property type="protein sequence ID" value="AT1G07230.1"/>
    <property type="gene ID" value="AT1G07230"/>
</dbReference>
<dbReference type="GeneID" id="837234"/>
<dbReference type="Gramene" id="AT1G07230.1">
    <property type="protein sequence ID" value="AT1G07230.1"/>
    <property type="gene ID" value="AT1G07230"/>
</dbReference>
<dbReference type="KEGG" id="ath:AT1G07230"/>
<dbReference type="Araport" id="AT1G07230"/>
<dbReference type="TAIR" id="AT1G07230">
    <property type="gene designation" value="NPC1"/>
</dbReference>
<dbReference type="eggNOG" id="ENOG502QPJ0">
    <property type="taxonomic scope" value="Eukaryota"/>
</dbReference>
<dbReference type="HOGENOM" id="CLU_029943_1_0_1"/>
<dbReference type="InParanoid" id="Q8L7Y9"/>
<dbReference type="OMA" id="ECCSYMS"/>
<dbReference type="PhylomeDB" id="Q8L7Y9"/>
<dbReference type="BioCyc" id="ARA:AT1G07230-MONOMER"/>
<dbReference type="BRENDA" id="3.1.4.3">
    <property type="organism ID" value="399"/>
</dbReference>
<dbReference type="PRO" id="PR:Q8L7Y9"/>
<dbReference type="Proteomes" id="UP000006548">
    <property type="component" value="Chromosome 1"/>
</dbReference>
<dbReference type="ExpressionAtlas" id="Q8L7Y9">
    <property type="expression patterns" value="baseline and differential"/>
</dbReference>
<dbReference type="GO" id="GO:0005576">
    <property type="term" value="C:extracellular region"/>
    <property type="evidence" value="ECO:0007669"/>
    <property type="project" value="UniProtKB-SubCell"/>
</dbReference>
<dbReference type="GO" id="GO:0000137">
    <property type="term" value="C:Golgi cis cisterna"/>
    <property type="evidence" value="ECO:0007005"/>
    <property type="project" value="TAIR"/>
</dbReference>
<dbReference type="GO" id="GO:0042578">
    <property type="term" value="F:phosphoric ester hydrolase activity"/>
    <property type="evidence" value="ECO:0007669"/>
    <property type="project" value="UniProtKB-ARBA"/>
</dbReference>
<dbReference type="GO" id="GO:0006796">
    <property type="term" value="P:phosphate-containing compound metabolic process"/>
    <property type="evidence" value="ECO:0007669"/>
    <property type="project" value="UniProtKB-ARBA"/>
</dbReference>
<dbReference type="FunFam" id="3.40.720.10:FF:000011">
    <property type="entry name" value="Non-specific phospholipase C1"/>
    <property type="match status" value="1"/>
</dbReference>
<dbReference type="FunFam" id="3.40.720.10:FF:000028">
    <property type="entry name" value="Non-specific phospholipase C1"/>
    <property type="match status" value="1"/>
</dbReference>
<dbReference type="Gene3D" id="3.40.720.10">
    <property type="entry name" value="Alkaline Phosphatase, subunit A"/>
    <property type="match status" value="2"/>
</dbReference>
<dbReference type="InterPro" id="IPR017850">
    <property type="entry name" value="Alkaline_phosphatase_core_sf"/>
</dbReference>
<dbReference type="InterPro" id="IPR007312">
    <property type="entry name" value="Phosphoesterase"/>
</dbReference>
<dbReference type="PANTHER" id="PTHR31956:SF1">
    <property type="entry name" value="NON-SPECIFIC PHOSPHOLIPASE C1"/>
    <property type="match status" value="1"/>
</dbReference>
<dbReference type="PANTHER" id="PTHR31956">
    <property type="entry name" value="NON-SPECIFIC PHOSPHOLIPASE C4-RELATED"/>
    <property type="match status" value="1"/>
</dbReference>
<dbReference type="Pfam" id="PF04185">
    <property type="entry name" value="Phosphoesterase"/>
    <property type="match status" value="1"/>
</dbReference>
<proteinExistence type="evidence at transcript level"/>
<protein>
    <recommendedName>
        <fullName>Non-specific phospholipase C1</fullName>
        <ecNumber>3.1.-.-</ecNumber>
    </recommendedName>
</protein>
<accession>Q8L7Y9</accession>
<accession>Q9LML5</accession>
<sequence length="533" mass="60048">MAFRRVLTTVILFCYLLISSQSIEFKNSQKPHKIQGPIKTIVVVVMENRSFDHILGWLKSTRPEIDGLTGKESNPLNVSDPNSKKIFVSDDAVFVDMDPGHSFQAIREQIFGSNDTSGDPKMNGFAQQSESMEPGMAKNVMSGFKPEVLPVYTELANEFGVFDRWFASVPTSTQPNRFYVHSATSHGCSSNVKKDLVKGFPQKTIFDSLDENGLSFGIYYQNIPATFFFKSLRRLKHLVKFHSYALKFKLDAKLGKLPNYSVVEQRYFDIDLFPANDDHPSHDVAAGQRFVKEVYETLRSSPQWKEMALLITYDEHGGFYDHVPTPVKGVPNPDGIIGPDPFYFGFDRLGVRVPTFLISPWIEKGTVIHEPEGPTPHSQFEHSSIPATVKKLFNLKSHFLTKRDAWAGTFEKYFRIRDSPRQDCPEKLPEVKLSLRPWGAKEDSKLSEFQVELIQLASQLVGDHLLNSYPDIGKNMTVSEGNKYAEDAVQKFLEAGMAALEAGADENTIVTMRPSLTTRTSPSEGTNKYIGSY</sequence>
<comment type="subcellular location">
    <subcellularLocation>
        <location evidence="3">Secreted</location>
    </subcellularLocation>
</comment>
<comment type="tissue specificity">
    <text evidence="2">Expressed in roots, leaves, stems, flowers and siliques.</text>
</comment>
<comment type="induction">
    <text>Not induced by inorganic phosphate deprivation.</text>
</comment>
<comment type="similarity">
    <text evidence="3">Belongs to the bacterial phospholipase C family.</text>
</comment>
<gene>
    <name type="primary">NPC1</name>
    <name type="ordered locus">At1g07230</name>
    <name type="ORF">F10K1.6</name>
</gene>